<sequence length="387" mass="44239">MATVIPSPLSLGEDFYREAIEHCRSYNARLCAERSLRLPFLDSQTGVAQNNCYIWMEKTHRGPGLAPGQIYTYPARCWRKKRRLNILEDPRLRPCEYKIDCEAPLKKEGGLPEGPVLEALLCAETGEKKVELKEEETIMDCQKQQLLEFPHDLEVEDLEEDIPRRKNRARGKAYGIGGLRKRQDTASLEDRDKPYVCDICGKRYKNRPGLSYHYTHTHLAEEEGEEHTERHALPFHRKNNHKQFYKELAWVPEAQRKHTAKKAPDGTVIPNGYCDFCLGGSKKTGCPEDLISCADCGRSGHPSCLQFTVNMTAAVRTYRWQCIECKSCSLCGTSENDDQLLFCDDCDRGYHMYCLSPPMAEPPEGSWSCHLCLRHLKEKASAYITLT</sequence>
<evidence type="ECO:0000250" key="1">
    <source>
        <dbReference type="UniProtKB" id="Q92782"/>
    </source>
</evidence>
<evidence type="ECO:0000255" key="2">
    <source>
        <dbReference type="PROSITE-ProRule" id="PRU00042"/>
    </source>
</evidence>
<evidence type="ECO:0000255" key="3">
    <source>
        <dbReference type="PROSITE-ProRule" id="PRU00146"/>
    </source>
</evidence>
<evidence type="ECO:0000269" key="4">
    <source>
    </source>
</evidence>
<evidence type="ECO:0000303" key="5">
    <source>
    </source>
</evidence>
<evidence type="ECO:0000305" key="6"/>
<evidence type="ECO:0000312" key="7">
    <source>
        <dbReference type="MGI" id="MGI:1352748"/>
    </source>
</evidence>
<feature type="chain" id="PRO_0000168146" description="Zinc finger protein neuro-d4">
    <location>
        <begin position="1"/>
        <end position="387"/>
    </location>
</feature>
<feature type="zinc finger region" description="C2H2-type" evidence="2">
    <location>
        <begin position="195"/>
        <end position="218"/>
    </location>
</feature>
<feature type="zinc finger region" description="PHD-type 1" evidence="3">
    <location>
        <begin position="271"/>
        <end position="328"/>
    </location>
</feature>
<feature type="zinc finger region" description="PHD-type 2" evidence="3">
    <location>
        <begin position="325"/>
        <end position="375"/>
    </location>
</feature>
<feature type="binding site" evidence="3">
    <location>
        <position position="274"/>
    </location>
    <ligand>
        <name>Zn(2+)</name>
        <dbReference type="ChEBI" id="CHEBI:29105"/>
        <label>1</label>
    </ligand>
</feature>
<feature type="binding site" evidence="3">
    <location>
        <position position="277"/>
    </location>
    <ligand>
        <name>Zn(2+)</name>
        <dbReference type="ChEBI" id="CHEBI:29105"/>
        <label>1</label>
    </ligand>
</feature>
<feature type="binding site" evidence="3">
    <location>
        <position position="293"/>
    </location>
    <ligand>
        <name>Zn(2+)</name>
        <dbReference type="ChEBI" id="CHEBI:29105"/>
        <label>2</label>
    </ligand>
</feature>
<feature type="binding site" evidence="3">
    <location>
        <position position="296"/>
    </location>
    <ligand>
        <name>Zn(2+)</name>
        <dbReference type="ChEBI" id="CHEBI:29105"/>
        <label>2</label>
    </ligand>
</feature>
<feature type="binding site" evidence="3">
    <location>
        <position position="301"/>
    </location>
    <ligand>
        <name>Zn(2+)</name>
        <dbReference type="ChEBI" id="CHEBI:29105"/>
        <label>1</label>
    </ligand>
</feature>
<feature type="binding site" evidence="3">
    <location>
        <position position="304"/>
    </location>
    <ligand>
        <name>Zn(2+)</name>
        <dbReference type="ChEBI" id="CHEBI:29105"/>
        <label>1</label>
    </ligand>
</feature>
<feature type="binding site" evidence="3">
    <location>
        <position position="322"/>
    </location>
    <ligand>
        <name>Zn(2+)</name>
        <dbReference type="ChEBI" id="CHEBI:29105"/>
        <label>2</label>
    </ligand>
</feature>
<feature type="binding site" evidence="3">
    <location>
        <position position="325"/>
    </location>
    <ligand>
        <name>Zn(2+)</name>
        <dbReference type="ChEBI" id="CHEBI:29105"/>
        <label>4</label>
    </ligand>
</feature>
<feature type="binding site" evidence="3">
    <location>
        <position position="328"/>
    </location>
    <ligand>
        <name>Zn(2+)</name>
        <dbReference type="ChEBI" id="CHEBI:29105"/>
        <label>3</label>
    </ligand>
</feature>
<feature type="binding site" evidence="3">
    <location>
        <position position="331"/>
    </location>
    <ligand>
        <name>Zn(2+)</name>
        <dbReference type="ChEBI" id="CHEBI:29105"/>
        <label>3</label>
    </ligand>
</feature>
<feature type="binding site" evidence="3">
    <location>
        <position position="343"/>
    </location>
    <ligand>
        <name>Zn(2+)</name>
        <dbReference type="ChEBI" id="CHEBI:29105"/>
        <label>4</label>
    </ligand>
</feature>
<feature type="binding site" evidence="3">
    <location>
        <position position="346"/>
    </location>
    <ligand>
        <name>Zn(2+)</name>
        <dbReference type="ChEBI" id="CHEBI:29105"/>
        <label>4</label>
    </ligand>
</feature>
<feature type="binding site" evidence="3">
    <location>
        <position position="351"/>
    </location>
    <ligand>
        <name>Zn(2+)</name>
        <dbReference type="ChEBI" id="CHEBI:29105"/>
        <label>3</label>
    </ligand>
</feature>
<feature type="binding site" evidence="3">
    <location>
        <position position="354"/>
    </location>
    <ligand>
        <name>Zn(2+)</name>
        <dbReference type="ChEBI" id="CHEBI:29105"/>
        <label>3</label>
    </ligand>
</feature>
<feature type="binding site" evidence="3">
    <location>
        <position position="369"/>
    </location>
    <ligand>
        <name>Zn(2+)</name>
        <dbReference type="ChEBI" id="CHEBI:29105"/>
        <label>4</label>
    </ligand>
</feature>
<feature type="binding site" evidence="3">
    <location>
        <position position="372"/>
    </location>
    <ligand>
        <name>Zn(2+)</name>
        <dbReference type="ChEBI" id="CHEBI:29105"/>
        <label>4</label>
    </ligand>
</feature>
<feature type="cross-link" description="Glycyl lysine isopeptide (Lys-Gly) (interchain with G-Cter in SUMO2)" evidence="1">
    <location>
        <position position="106"/>
    </location>
</feature>
<feature type="cross-link" description="Glycyl lysine isopeptide (Lys-Gly) (interchain with G-Cter in SUMO2)" evidence="1">
    <location>
        <position position="129"/>
    </location>
</feature>
<feature type="cross-link" description="Glycyl lysine isopeptide (Lys-Gly) (interchain with G-Cter in SUMO2)" evidence="1">
    <location>
        <position position="133"/>
    </location>
</feature>
<feature type="splice variant" id="VSP_005609" description="In isoform 3." evidence="5">
    <location>
        <begin position="1"/>
        <end position="55"/>
    </location>
</feature>
<feature type="splice variant" id="VSP_005608" description="In isoform 2." evidence="5">
    <original>MATVIPSPL</original>
    <variation>MATAIQNPLK</variation>
    <location>
        <begin position="1"/>
        <end position="9"/>
    </location>
</feature>
<feature type="sequence variant">
    <original>A</original>
    <variation>P</variation>
    <location>
        <position position="314"/>
    </location>
</feature>
<accession>Q9QX66</accession>
<accession>Q9QX65</accession>
<accession>Q9QYA4</accession>
<keyword id="KW-0025">Alternative splicing</keyword>
<keyword id="KW-0963">Cytoplasm</keyword>
<keyword id="KW-1017">Isopeptide bond</keyword>
<keyword id="KW-0479">Metal-binding</keyword>
<keyword id="KW-0524">Neurogenesis</keyword>
<keyword id="KW-0539">Nucleus</keyword>
<keyword id="KW-1185">Reference proteome</keyword>
<keyword id="KW-0677">Repeat</keyword>
<keyword id="KW-0804">Transcription</keyword>
<keyword id="KW-0805">Transcription regulation</keyword>
<keyword id="KW-0832">Ubl conjugation</keyword>
<keyword id="KW-0862">Zinc</keyword>
<keyword id="KW-0863">Zinc-finger</keyword>
<reference key="1">
    <citation type="journal article" date="2000" name="Mamm. Genome">
        <title>Structure and expression of two members of the d4 gene family in mouse.</title>
        <authorList>
            <person name="Mertsalov I.B."/>
            <person name="Kulikova D.A."/>
            <person name="Alimova-Kost M.V."/>
            <person name="Ninkina N.N."/>
            <person name="Korochkin L.I."/>
            <person name="Buchman V.L."/>
        </authorList>
    </citation>
    <scope>NUCLEOTIDE SEQUENCE [GENOMIC DNA / MRNA] (ISOFORMS 1; 2 AND 3)</scope>
    <source>
        <strain>CD-1</strain>
    </source>
</reference>
<reference key="2">
    <citation type="journal article" date="2007" name="Neuron">
        <title>An essential switch in subunit composition of a chromatin remodeling complex during neural development.</title>
        <authorList>
            <person name="Lessard J."/>
            <person name="Wu J.I."/>
            <person name="Ranish J.A."/>
            <person name="Wan M."/>
            <person name="Winslow M.M."/>
            <person name="Staahl B.T."/>
            <person name="Wu H."/>
            <person name="Aebersold R."/>
            <person name="Graef I.A."/>
            <person name="Crabtree G.R."/>
        </authorList>
    </citation>
    <scope>FUNCTION OF THE NBAF AND NPBAF COMPLEXES</scope>
    <scope>IDENTIFICATION BY MASS SPECTROMETRY</scope>
    <scope>IDENTIFICATION IN THE NBAF COMPLEX</scope>
    <scope>TISSUE SPECIFICITY</scope>
    <scope>DEVELOPMENTAL STAGE</scope>
</reference>
<protein>
    <recommendedName>
        <fullName evidence="6">Zinc finger protein neuro-d4</fullName>
    </recommendedName>
    <alternativeName>
        <fullName>BRG1-associated factor 45B</fullName>
        <shortName>BAF45B</shortName>
    </alternativeName>
    <alternativeName>
        <fullName>D4, zinc and double PHD fingers family 1</fullName>
    </alternativeName>
</protein>
<dbReference type="EMBL" id="U48238">
    <property type="protein sequence ID" value="AAF21455.1"/>
    <property type="molecule type" value="mRNA"/>
</dbReference>
<dbReference type="EMBL" id="U48239">
    <property type="protein sequence ID" value="AAF21456.1"/>
    <property type="molecule type" value="mRNA"/>
</dbReference>
<dbReference type="EMBL" id="AF108133">
    <property type="protein sequence ID" value="AAF21305.1"/>
    <property type="molecule type" value="Genomic_DNA"/>
</dbReference>
<dbReference type="CCDS" id="CCDS21071.1">
    <molecule id="Q9QX66-2"/>
</dbReference>
<dbReference type="CCDS" id="CCDS90198.1">
    <molecule id="Q9QX66-1"/>
</dbReference>
<dbReference type="RefSeq" id="NP_001355300.1">
    <molecule id="Q9QX66-1"/>
    <property type="nucleotide sequence ID" value="NM_001368371.2"/>
</dbReference>
<dbReference type="RefSeq" id="NP_001390148.1">
    <molecule id="Q9QX66-3"/>
    <property type="nucleotide sequence ID" value="NM_001403219.1"/>
</dbReference>
<dbReference type="RefSeq" id="NP_001390149.1">
    <molecule id="Q9QX66-3"/>
    <property type="nucleotide sequence ID" value="NM_001403220.1"/>
</dbReference>
<dbReference type="RefSeq" id="NP_038902.1">
    <molecule id="Q9QX66-2"/>
    <property type="nucleotide sequence ID" value="NM_013874.3"/>
</dbReference>
<dbReference type="SMR" id="Q9QX66"/>
<dbReference type="BioGRID" id="205927">
    <property type="interactions" value="2"/>
</dbReference>
<dbReference type="ComplexPortal" id="CPX-1256">
    <property type="entry name" value="Neuron-specific SWI/SNF ATP-dependent chromatin remodeling complex, ARID1A-SMARCA2 variant"/>
</dbReference>
<dbReference type="ComplexPortal" id="CPX-1257">
    <property type="entry name" value="Neuron-specific SWI/SNF ATP-dependent chromatin remodeling complex, ARID1A-SMARCA4 variant"/>
</dbReference>
<dbReference type="ComplexPortal" id="CPX-1258">
    <property type="entry name" value="Neuron-specific SWI/SNF ATP-dependent chromatin remodeling complex, ARID1B-SMARCA2 variant"/>
</dbReference>
<dbReference type="ComplexPortal" id="CPX-1259">
    <property type="entry name" value="Neuron-specific SWI/SNF ATP-dependent chromatin remodeling complex, ARID1B-SMARCA4 variant"/>
</dbReference>
<dbReference type="FunCoup" id="Q9QX66">
    <property type="interactions" value="255"/>
</dbReference>
<dbReference type="STRING" id="10090.ENSMUSP00000054385"/>
<dbReference type="iPTMnet" id="Q9QX66"/>
<dbReference type="PhosphoSitePlus" id="Q9QX66"/>
<dbReference type="PaxDb" id="10090-ENSMUSP00000054385"/>
<dbReference type="ProteomicsDB" id="279803">
    <molecule id="Q9QX66-1"/>
</dbReference>
<dbReference type="ProteomicsDB" id="279804">
    <molecule id="Q9QX66-2"/>
</dbReference>
<dbReference type="ProteomicsDB" id="279805">
    <molecule id="Q9QX66-3"/>
</dbReference>
<dbReference type="Antibodypedia" id="16434">
    <property type="antibodies" value="166 antibodies from 27 providers"/>
</dbReference>
<dbReference type="DNASU" id="29861"/>
<dbReference type="Ensembl" id="ENSMUST00000049977.13">
    <molecule id="Q9QX66-2"/>
    <property type="protein sequence ID" value="ENSMUSP00000054385.7"/>
    <property type="gene ID" value="ENSMUSG00000030584.15"/>
</dbReference>
<dbReference type="Ensembl" id="ENSMUST00000065181.12">
    <molecule id="Q9QX66-1"/>
    <property type="protein sequence ID" value="ENSMUSP00000070539.6"/>
    <property type="gene ID" value="ENSMUSG00000030584.15"/>
</dbReference>
<dbReference type="GeneID" id="29861"/>
<dbReference type="KEGG" id="mmu:29861"/>
<dbReference type="AGR" id="MGI:1352748"/>
<dbReference type="CTD" id="8193"/>
<dbReference type="MGI" id="MGI:1352748">
    <property type="gene designation" value="Dpf1"/>
</dbReference>
<dbReference type="VEuPathDB" id="HostDB:ENSMUSG00000030584"/>
<dbReference type="eggNOG" id="KOG1244">
    <property type="taxonomic scope" value="Eukaryota"/>
</dbReference>
<dbReference type="GeneTree" id="ENSGT00940000160692"/>
<dbReference type="InParanoid" id="Q9QX66"/>
<dbReference type="TreeFam" id="TF318971"/>
<dbReference type="BioGRID-ORCS" id="29861">
    <property type="hits" value="1 hit in 83 CRISPR screens"/>
</dbReference>
<dbReference type="PRO" id="PR:Q9QX66"/>
<dbReference type="Proteomes" id="UP000000589">
    <property type="component" value="Chromosome 7"/>
</dbReference>
<dbReference type="RNAct" id="Q9QX66">
    <property type="molecule type" value="protein"/>
</dbReference>
<dbReference type="Bgee" id="ENSMUSG00000030584">
    <property type="expression patterns" value="Expressed in cortical plate and 159 other cell types or tissues"/>
</dbReference>
<dbReference type="ExpressionAtlas" id="Q9QX66">
    <property type="expression patterns" value="baseline and differential"/>
</dbReference>
<dbReference type="GO" id="GO:0000785">
    <property type="term" value="C:chromatin"/>
    <property type="evidence" value="ECO:0000303"/>
    <property type="project" value="ComplexPortal"/>
</dbReference>
<dbReference type="GO" id="GO:0005737">
    <property type="term" value="C:cytoplasm"/>
    <property type="evidence" value="ECO:0007669"/>
    <property type="project" value="UniProtKB-SubCell"/>
</dbReference>
<dbReference type="GO" id="GO:0071565">
    <property type="term" value="C:nBAF complex"/>
    <property type="evidence" value="ECO:0000314"/>
    <property type="project" value="UniProtKB"/>
</dbReference>
<dbReference type="GO" id="GO:0005654">
    <property type="term" value="C:nucleoplasm"/>
    <property type="evidence" value="ECO:0000304"/>
    <property type="project" value="Reactome"/>
</dbReference>
<dbReference type="GO" id="GO:0008270">
    <property type="term" value="F:zinc ion binding"/>
    <property type="evidence" value="ECO:0007669"/>
    <property type="project" value="UniProtKB-KW"/>
</dbReference>
<dbReference type="GO" id="GO:0006338">
    <property type="term" value="P:chromatin remodeling"/>
    <property type="evidence" value="ECO:0000303"/>
    <property type="project" value="ComplexPortal"/>
</dbReference>
<dbReference type="GO" id="GO:0007399">
    <property type="term" value="P:nervous system development"/>
    <property type="evidence" value="ECO:0000315"/>
    <property type="project" value="UniProtKB"/>
</dbReference>
<dbReference type="GO" id="GO:0045597">
    <property type="term" value="P:positive regulation of cell differentiation"/>
    <property type="evidence" value="ECO:0000303"/>
    <property type="project" value="ComplexPortal"/>
</dbReference>
<dbReference type="GO" id="GO:2000781">
    <property type="term" value="P:positive regulation of double-strand break repair"/>
    <property type="evidence" value="ECO:0000303"/>
    <property type="project" value="ComplexPortal"/>
</dbReference>
<dbReference type="GO" id="GO:0070316">
    <property type="term" value="P:regulation of G0 to G1 transition"/>
    <property type="evidence" value="ECO:0000303"/>
    <property type="project" value="ComplexPortal"/>
</dbReference>
<dbReference type="GO" id="GO:2000045">
    <property type="term" value="P:regulation of G1/S transition of mitotic cell cycle"/>
    <property type="evidence" value="ECO:0000303"/>
    <property type="project" value="ComplexPortal"/>
</dbReference>
<dbReference type="GO" id="GO:0030071">
    <property type="term" value="P:regulation of mitotic metaphase/anaphase transition"/>
    <property type="evidence" value="ECO:0000303"/>
    <property type="project" value="ComplexPortal"/>
</dbReference>
<dbReference type="GO" id="GO:2000819">
    <property type="term" value="P:regulation of nucleotide-excision repair"/>
    <property type="evidence" value="ECO:0000303"/>
    <property type="project" value="ComplexPortal"/>
</dbReference>
<dbReference type="GO" id="GO:0006357">
    <property type="term" value="P:regulation of transcription by RNA polymerase II"/>
    <property type="evidence" value="ECO:0000303"/>
    <property type="project" value="ComplexPortal"/>
</dbReference>
<dbReference type="CDD" id="cd15690">
    <property type="entry name" value="PHD1_DPF1"/>
    <property type="match status" value="1"/>
</dbReference>
<dbReference type="CDD" id="cd15530">
    <property type="entry name" value="PHD2_d4"/>
    <property type="match status" value="1"/>
</dbReference>
<dbReference type="FunFam" id="3.30.160.60:FF:003699">
    <property type="entry name" value="D4, zinc and double PHD fingers family 1"/>
    <property type="match status" value="1"/>
</dbReference>
<dbReference type="FunFam" id="3.30.40.10:FF:000005">
    <property type="entry name" value="zinc finger protein isoform X1"/>
    <property type="match status" value="1"/>
</dbReference>
<dbReference type="Gene3D" id="3.30.160.60">
    <property type="entry name" value="Classic Zinc Finger"/>
    <property type="match status" value="1"/>
</dbReference>
<dbReference type="Gene3D" id="3.30.40.10">
    <property type="entry name" value="Zinc/RING finger domain, C3HC4 (zinc finger)"/>
    <property type="match status" value="1"/>
</dbReference>
<dbReference type="InterPro" id="IPR025750">
    <property type="entry name" value="DPF1-3_N"/>
</dbReference>
<dbReference type="InterPro" id="IPR036236">
    <property type="entry name" value="Znf_C2H2_sf"/>
</dbReference>
<dbReference type="InterPro" id="IPR013087">
    <property type="entry name" value="Znf_C2H2_type"/>
</dbReference>
<dbReference type="InterPro" id="IPR011011">
    <property type="entry name" value="Znf_FYVE_PHD"/>
</dbReference>
<dbReference type="InterPro" id="IPR001965">
    <property type="entry name" value="Znf_PHD"/>
</dbReference>
<dbReference type="InterPro" id="IPR019787">
    <property type="entry name" value="Znf_PHD-finger"/>
</dbReference>
<dbReference type="InterPro" id="IPR013083">
    <property type="entry name" value="Znf_RING/FYVE/PHD"/>
</dbReference>
<dbReference type="PANTHER" id="PTHR45888">
    <property type="entry name" value="HL01030P-RELATED"/>
    <property type="match status" value="1"/>
</dbReference>
<dbReference type="PANTHER" id="PTHR45888:SF14">
    <property type="entry name" value="ZINC FINGER PROTEIN NEURO-D4"/>
    <property type="match status" value="1"/>
</dbReference>
<dbReference type="Pfam" id="PF14051">
    <property type="entry name" value="DPF1-3_N"/>
    <property type="match status" value="1"/>
</dbReference>
<dbReference type="Pfam" id="PF00628">
    <property type="entry name" value="PHD"/>
    <property type="match status" value="2"/>
</dbReference>
<dbReference type="SMART" id="SM00249">
    <property type="entry name" value="PHD"/>
    <property type="match status" value="2"/>
</dbReference>
<dbReference type="SMART" id="SM00355">
    <property type="entry name" value="ZnF_C2H2"/>
    <property type="match status" value="1"/>
</dbReference>
<dbReference type="SUPFAM" id="SSF57667">
    <property type="entry name" value="beta-beta-alpha zinc fingers"/>
    <property type="match status" value="1"/>
</dbReference>
<dbReference type="SUPFAM" id="SSF57903">
    <property type="entry name" value="FYVE/PHD zinc finger"/>
    <property type="match status" value="2"/>
</dbReference>
<dbReference type="PROSITE" id="PS01359">
    <property type="entry name" value="ZF_PHD_1"/>
    <property type="match status" value="1"/>
</dbReference>
<dbReference type="PROSITE" id="PS50016">
    <property type="entry name" value="ZF_PHD_2"/>
    <property type="match status" value="2"/>
</dbReference>
<dbReference type="PROSITE" id="PS00028">
    <property type="entry name" value="ZINC_FINGER_C2H2_1"/>
    <property type="match status" value="1"/>
</dbReference>
<dbReference type="PROSITE" id="PS50157">
    <property type="entry name" value="ZINC_FINGER_C2H2_2"/>
    <property type="match status" value="1"/>
</dbReference>
<comment type="function">
    <text evidence="4">May have an important role in developing neurons by participating in regulation of cell survival, possibly as a neurospecific transcription factor. Belongs to the neuron-specific chromatin remodeling complex (nBAF complex). During neural development a switch from a stem/progenitor to a postmitotic chromatin remodeling mechanism occurs as neurons exit the cell cycle and become committed to their adult state. The transition from proliferating neural stem/progenitor cells to postmitotic neurons requires a switch in subunit composition of the npBAF and nBAF complexes. As neural progenitors exit mitosis and differentiate into neurons, npBAF complexes which contain ACTL6A/BAF53A and PHF10/BAF45A, are exchanged for homologous alternative ACTL6B/BAF53B and DPF1/BAF45B or DPF3/BAF45C subunits in neuron-specific complexes (nBAF). The npBAF complex is essential for the self-renewal/proliferative capacity of the multipotent neural stem cells. The nBAF complex along with CREST plays a role regulating the activity of genes essential for dendrite growth.</text>
</comment>
<comment type="subunit">
    <text evidence="4">Component of neuron-specific chromatin remodeling complex (nBAF complex) composed of at least, ARID1A/BAF250A or ARID1B/BAF250B, SMARCD1/BAF60A, SMARCD3/BAF60C, SMARCA2/BRM/BAF190B, SMARCA4/BRG1/BAF190A, SMARCB1/BAF47, SMARCC1/BAF155, SMARCE1/BAF57, SMARCC2/BAF170, DPF1/BAF45B, DPF3/BAF45C, ACTL6B/BAF53B and actin.</text>
</comment>
<comment type="subcellular location">
    <subcellularLocation>
        <location evidence="6">Cytoplasm</location>
    </subcellularLocation>
    <subcellularLocation>
        <location evidence="6">Nucleus</location>
    </subcellularLocation>
</comment>
<comment type="alternative products">
    <event type="alternative splicing"/>
    <isoform>
        <id>Q9QX66-1</id>
        <name>1</name>
        <sequence type="displayed"/>
    </isoform>
    <isoform>
        <id>Q9QX66-2</id>
        <name>2</name>
        <sequence type="described" ref="VSP_005608"/>
    </isoform>
    <isoform>
        <id>Q9QX66-3</id>
        <name>3</name>
        <sequence type="described" ref="VSP_005609"/>
    </isoform>
    <text>Additional isoforms seem to exist.</text>
</comment>
<comment type="tissue specificity">
    <text evidence="4">At embryonic stages, predominant expression in the nervous system. Expressed specifically in postmitotic neurons (at protein level).</text>
</comment>
<comment type="developmental stage">
    <text evidence="4">Low levels at embryonic day 9.5, and then sharp increase since embryonic day 12. In the developing forebrain and cerebellar primordium, strictly expressed in postmitotic neurons.</text>
</comment>
<comment type="similarity">
    <text evidence="6">Belongs to the requiem/DPF family.</text>
</comment>
<organism>
    <name type="scientific">Mus musculus</name>
    <name type="common">Mouse</name>
    <dbReference type="NCBI Taxonomy" id="10090"/>
    <lineage>
        <taxon>Eukaryota</taxon>
        <taxon>Metazoa</taxon>
        <taxon>Chordata</taxon>
        <taxon>Craniata</taxon>
        <taxon>Vertebrata</taxon>
        <taxon>Euteleostomi</taxon>
        <taxon>Mammalia</taxon>
        <taxon>Eutheria</taxon>
        <taxon>Euarchontoglires</taxon>
        <taxon>Glires</taxon>
        <taxon>Rodentia</taxon>
        <taxon>Myomorpha</taxon>
        <taxon>Muroidea</taxon>
        <taxon>Muridae</taxon>
        <taxon>Murinae</taxon>
        <taxon>Mus</taxon>
        <taxon>Mus</taxon>
    </lineage>
</organism>
<name>DPF1_MOUSE</name>
<gene>
    <name evidence="7" type="primary">Dpf1</name>
    <name type="synonym">Baf45b</name>
    <name type="synonym">Neud4</name>
</gene>
<proteinExistence type="evidence at protein level"/>